<gene>
    <name evidence="3" type="primary">atp5if1a</name>
    <name type="synonym">atpia</name>
    <name type="synonym">atpif1</name>
    <name type="synonym">pnt</name>
    <name type="ORF">Zgc:162207</name>
</gene>
<protein>
    <recommendedName>
        <fullName evidence="7">ATPase inhibitor A, mitochondrial</fullName>
    </recommendedName>
    <alternativeName>
        <fullName evidence="3">ATP synthase F1 subunit epsilon A</fullName>
    </alternativeName>
    <alternativeName>
        <fullName>Inhibitor of F(1)F(o)-ATPase A</fullName>
        <shortName>IF(1) A</shortName>
        <shortName>IF1 A</shortName>
    </alternativeName>
    <alternativeName>
        <fullName>Protein pinotage</fullName>
    </alternativeName>
</protein>
<keyword id="KW-0175">Coiled coil</keyword>
<keyword id="KW-0496">Mitochondrion</keyword>
<keyword id="KW-1185">Reference proteome</keyword>
<keyword id="KW-0809">Transit peptide</keyword>
<accession>A3KNL5</accession>
<proteinExistence type="inferred from homology"/>
<dbReference type="EMBL" id="CU633999">
    <property type="status" value="NOT_ANNOTATED_CDS"/>
    <property type="molecule type" value="Genomic_DNA"/>
</dbReference>
<dbReference type="EMBL" id="CU634003">
    <property type="status" value="NOT_ANNOTATED_CDS"/>
    <property type="molecule type" value="Genomic_DNA"/>
</dbReference>
<dbReference type="EMBL" id="BC133905">
    <property type="protein sequence ID" value="AAI33906.1"/>
    <property type="molecule type" value="mRNA"/>
</dbReference>
<dbReference type="RefSeq" id="NP_001082990.1">
    <property type="nucleotide sequence ID" value="NM_001089521.1"/>
</dbReference>
<dbReference type="SMR" id="A3KNL5"/>
<dbReference type="STRING" id="7955.ENSDARP00000081676"/>
<dbReference type="PaxDb" id="7955-ENSDARP00000081676"/>
<dbReference type="PeptideAtlas" id="A3KNL5"/>
<dbReference type="Ensembl" id="ENSDART00000087242">
    <property type="protein sequence ID" value="ENSDARP00000081676"/>
    <property type="gene ID" value="ENSDARG00000067975"/>
</dbReference>
<dbReference type="GeneID" id="100037369"/>
<dbReference type="KEGG" id="dre:100037369"/>
<dbReference type="AGR" id="ZFIN:ZDB-GENE-070410-36"/>
<dbReference type="CTD" id="100037369"/>
<dbReference type="ZFIN" id="ZDB-GENE-070410-36">
    <property type="gene designation" value="atp5if1a"/>
</dbReference>
<dbReference type="eggNOG" id="ENOG502S4JP">
    <property type="taxonomic scope" value="Eukaryota"/>
</dbReference>
<dbReference type="HOGENOM" id="CLU_147479_1_2_1"/>
<dbReference type="InParanoid" id="A3KNL5"/>
<dbReference type="OMA" id="HIAIHRE"/>
<dbReference type="PhylomeDB" id="A3KNL5"/>
<dbReference type="TreeFam" id="TF320659"/>
<dbReference type="PRO" id="PR:A3KNL5"/>
<dbReference type="Proteomes" id="UP000000437">
    <property type="component" value="Chromosome 19"/>
</dbReference>
<dbReference type="Bgee" id="ENSDARG00000067975">
    <property type="expression patterns" value="Expressed in early embryo and 28 other cell types or tissues"/>
</dbReference>
<dbReference type="ExpressionAtlas" id="A3KNL5">
    <property type="expression patterns" value="baseline and differential"/>
</dbReference>
<dbReference type="GO" id="GO:0005737">
    <property type="term" value="C:cytoplasm"/>
    <property type="evidence" value="ECO:0000318"/>
    <property type="project" value="GO_Central"/>
</dbReference>
<dbReference type="GO" id="GO:0005739">
    <property type="term" value="C:mitochondrion"/>
    <property type="evidence" value="ECO:0000318"/>
    <property type="project" value="GO_Central"/>
</dbReference>
<dbReference type="GO" id="GO:0051117">
    <property type="term" value="F:ATPase binding"/>
    <property type="evidence" value="ECO:0000250"/>
    <property type="project" value="UniProtKB"/>
</dbReference>
<dbReference type="GO" id="GO:0042030">
    <property type="term" value="F:ATPase inhibitor activity"/>
    <property type="evidence" value="ECO:0000250"/>
    <property type="project" value="UniProtKB"/>
</dbReference>
<dbReference type="GO" id="GO:0042803">
    <property type="term" value="F:protein homodimerization activity"/>
    <property type="evidence" value="ECO:0000250"/>
    <property type="project" value="UniProtKB"/>
</dbReference>
<dbReference type="GO" id="GO:0030218">
    <property type="term" value="P:erythrocyte differentiation"/>
    <property type="evidence" value="ECO:0000315"/>
    <property type="project" value="UniProtKB"/>
</dbReference>
<dbReference type="GO" id="GO:0006783">
    <property type="term" value="P:heme biosynthetic process"/>
    <property type="evidence" value="ECO:0000315"/>
    <property type="project" value="UniProtKB"/>
</dbReference>
<dbReference type="GO" id="GO:1905707">
    <property type="term" value="P:negative regulation of mitochondrial ATP synthesis coupled proton transport"/>
    <property type="evidence" value="ECO:0000250"/>
    <property type="project" value="UniProtKB"/>
</dbReference>
<dbReference type="GO" id="GO:0007634">
    <property type="term" value="P:optokinetic behavior"/>
    <property type="evidence" value="ECO:0000315"/>
    <property type="project" value="ZFIN"/>
</dbReference>
<dbReference type="GO" id="GO:0051289">
    <property type="term" value="P:protein homotetramerization"/>
    <property type="evidence" value="ECO:0000250"/>
    <property type="project" value="UniProtKB"/>
</dbReference>
<dbReference type="GO" id="GO:0150077">
    <property type="term" value="P:regulation of neuroinflammatory response"/>
    <property type="evidence" value="ECO:0000315"/>
    <property type="project" value="ZFIN"/>
</dbReference>
<dbReference type="GO" id="GO:0007601">
    <property type="term" value="P:visual perception"/>
    <property type="evidence" value="ECO:0000315"/>
    <property type="project" value="ZFIN"/>
</dbReference>
<dbReference type="FunFam" id="1.20.5.500:FF:000004">
    <property type="entry name" value="ATPase inhibitor A, mitochondrial"/>
    <property type="match status" value="1"/>
</dbReference>
<dbReference type="FunFam" id="1.20.5.500:FF:000003">
    <property type="entry name" value="ATPase inhibitor B, mitochondrial"/>
    <property type="match status" value="1"/>
</dbReference>
<dbReference type="Gene3D" id="1.20.5.500">
    <property type="entry name" value="Single helix bin"/>
    <property type="match status" value="2"/>
</dbReference>
<dbReference type="InterPro" id="IPR007648">
    <property type="entry name" value="ATPase_inhibitor_mt"/>
</dbReference>
<dbReference type="PANTHER" id="PTHR48417">
    <property type="entry name" value="ATP SYNTHASE F1 SUBUNIT EPSILON"/>
    <property type="match status" value="1"/>
</dbReference>
<dbReference type="PANTHER" id="PTHR48417:SF1">
    <property type="entry name" value="ATP SYNTHASE F1 SUBUNIT EPSILON"/>
    <property type="match status" value="1"/>
</dbReference>
<dbReference type="Pfam" id="PF04568">
    <property type="entry name" value="IATP"/>
    <property type="match status" value="1"/>
</dbReference>
<dbReference type="SUPFAM" id="SSF64602">
    <property type="entry name" value="F1 ATPase inhibitor, IF1, C-terminal domain"/>
    <property type="match status" value="1"/>
</dbReference>
<comment type="function">
    <text evidence="2 6">Endogenous F(1)F(o)-ATPase inhibitor limiting ATP depletion when the mitochondrial membrane potential falls below a threshold and the F(1)F(o)-ATP synthase starts hydrolyzing ATP to pump protons out of the mitochondrial matrix. Required to avoid the consumption of cellular ATP when the F(1)F(o)-ATP synthase enzyme acts as an ATP hydrolase (By similarity). Indirectly acts as a regulator of heme synthesis in erythroid tissues: regulates heme synthesis by modulating the mitochondrial pH and redox potential, allowing fech to efficiently catalyze the incorporation of iron into protoporphyrin IX to produce heme (PubMed:23135403).</text>
</comment>
<comment type="subunit">
    <text evidence="1">Homodimer; represents the active form and is present at a pH value below 6.5. Homotetramer; represents the inactive form and is present at a pH value above 7.0 (By similarity).</text>
</comment>
<comment type="subcellular location">
    <subcellularLocation>
        <location evidence="1">Mitochondrion</location>
    </subcellularLocation>
</comment>
<comment type="domain">
    <text evidence="1">Forms an alpha-helical dimer with monomers associated via an antiparallel alpha-helical coiled coil composed of residues 73-105, leaving each N-terminal inhibitory region (residues 22-51) accessible for interaction with an F1 catalytic domain. The inhibitory N-terminal region (residues 22-51) binds the alpha(ADP-bound)-beta(ADP-bound) (ATP5F1A-ATP5F1B) interface of F1-ATPase, and also contact the central gamma subunit (ATP5F1C). This dimeric state is favored by pH values below 7.0, and at higher values the dimers associate to form inactive homotetramer, where the inhibitory region is occluded, masking its inhibitory activity (By similarity).</text>
</comment>
<comment type="disruption phenotype">
    <text evidence="6">Defects in circulating erythroid cells. Embryos are anemic despite normal expression of the erythroid cell markers. The erythrocytes from embryos that survive to adult stage exhibit hypochromic, microcytic anemia. Histological analysis of adult haematopoietic tissues does not show morphological defects. Defects are due to changes in the mitochondrial pH-and consequently the redox potential-to change to a level that reduces [2Fe-2S] cluster-containing fech activity, thereby reducing heme synthesis, resulting in hypochromic anemia.</text>
</comment>
<comment type="similarity">
    <text evidence="7">Belongs to the ATPase inhibitor family.</text>
</comment>
<evidence type="ECO:0000250" key="1"/>
<evidence type="ECO:0000250" key="2">
    <source>
        <dbReference type="UniProtKB" id="P01096"/>
    </source>
</evidence>
<evidence type="ECO:0000250" key="3">
    <source>
        <dbReference type="UniProtKB" id="Q9UII2"/>
    </source>
</evidence>
<evidence type="ECO:0000255" key="4"/>
<evidence type="ECO:0000256" key="5">
    <source>
        <dbReference type="SAM" id="MobiDB-lite"/>
    </source>
</evidence>
<evidence type="ECO:0000269" key="6">
    <source>
    </source>
</evidence>
<evidence type="ECO:0000305" key="7"/>
<name>ATF1A_DANRE</name>
<reference key="1">
    <citation type="journal article" date="2013" name="Nature">
        <title>The zebrafish reference genome sequence and its relationship to the human genome.</title>
        <authorList>
            <person name="Howe K."/>
            <person name="Clark M.D."/>
            <person name="Torroja C.F."/>
            <person name="Torrance J."/>
            <person name="Berthelot C."/>
            <person name="Muffato M."/>
            <person name="Collins J.E."/>
            <person name="Humphray S."/>
            <person name="McLaren K."/>
            <person name="Matthews L."/>
            <person name="McLaren S."/>
            <person name="Sealy I."/>
            <person name="Caccamo M."/>
            <person name="Churcher C."/>
            <person name="Scott C."/>
            <person name="Barrett J.C."/>
            <person name="Koch R."/>
            <person name="Rauch G.J."/>
            <person name="White S."/>
            <person name="Chow W."/>
            <person name="Kilian B."/>
            <person name="Quintais L.T."/>
            <person name="Guerra-Assuncao J.A."/>
            <person name="Zhou Y."/>
            <person name="Gu Y."/>
            <person name="Yen J."/>
            <person name="Vogel J.H."/>
            <person name="Eyre T."/>
            <person name="Redmond S."/>
            <person name="Banerjee R."/>
            <person name="Chi J."/>
            <person name="Fu B."/>
            <person name="Langley E."/>
            <person name="Maguire S.F."/>
            <person name="Laird G.K."/>
            <person name="Lloyd D."/>
            <person name="Kenyon E."/>
            <person name="Donaldson S."/>
            <person name="Sehra H."/>
            <person name="Almeida-King J."/>
            <person name="Loveland J."/>
            <person name="Trevanion S."/>
            <person name="Jones M."/>
            <person name="Quail M."/>
            <person name="Willey D."/>
            <person name="Hunt A."/>
            <person name="Burton J."/>
            <person name="Sims S."/>
            <person name="McLay K."/>
            <person name="Plumb B."/>
            <person name="Davis J."/>
            <person name="Clee C."/>
            <person name="Oliver K."/>
            <person name="Clark R."/>
            <person name="Riddle C."/>
            <person name="Elliot D."/>
            <person name="Threadgold G."/>
            <person name="Harden G."/>
            <person name="Ware D."/>
            <person name="Begum S."/>
            <person name="Mortimore B."/>
            <person name="Kerry G."/>
            <person name="Heath P."/>
            <person name="Phillimore B."/>
            <person name="Tracey A."/>
            <person name="Corby N."/>
            <person name="Dunn M."/>
            <person name="Johnson C."/>
            <person name="Wood J."/>
            <person name="Clark S."/>
            <person name="Pelan S."/>
            <person name="Griffiths G."/>
            <person name="Smith M."/>
            <person name="Glithero R."/>
            <person name="Howden P."/>
            <person name="Barker N."/>
            <person name="Lloyd C."/>
            <person name="Stevens C."/>
            <person name="Harley J."/>
            <person name="Holt K."/>
            <person name="Panagiotidis G."/>
            <person name="Lovell J."/>
            <person name="Beasley H."/>
            <person name="Henderson C."/>
            <person name="Gordon D."/>
            <person name="Auger K."/>
            <person name="Wright D."/>
            <person name="Collins J."/>
            <person name="Raisen C."/>
            <person name="Dyer L."/>
            <person name="Leung K."/>
            <person name="Robertson L."/>
            <person name="Ambridge K."/>
            <person name="Leongamornlert D."/>
            <person name="McGuire S."/>
            <person name="Gilderthorp R."/>
            <person name="Griffiths C."/>
            <person name="Manthravadi D."/>
            <person name="Nichol S."/>
            <person name="Barker G."/>
            <person name="Whitehead S."/>
            <person name="Kay M."/>
            <person name="Brown J."/>
            <person name="Murnane C."/>
            <person name="Gray E."/>
            <person name="Humphries M."/>
            <person name="Sycamore N."/>
            <person name="Barker D."/>
            <person name="Saunders D."/>
            <person name="Wallis J."/>
            <person name="Babbage A."/>
            <person name="Hammond S."/>
            <person name="Mashreghi-Mohammadi M."/>
            <person name="Barr L."/>
            <person name="Martin S."/>
            <person name="Wray P."/>
            <person name="Ellington A."/>
            <person name="Matthews N."/>
            <person name="Ellwood M."/>
            <person name="Woodmansey R."/>
            <person name="Clark G."/>
            <person name="Cooper J."/>
            <person name="Tromans A."/>
            <person name="Grafham D."/>
            <person name="Skuce C."/>
            <person name="Pandian R."/>
            <person name="Andrews R."/>
            <person name="Harrison E."/>
            <person name="Kimberley A."/>
            <person name="Garnett J."/>
            <person name="Fosker N."/>
            <person name="Hall R."/>
            <person name="Garner P."/>
            <person name="Kelly D."/>
            <person name="Bird C."/>
            <person name="Palmer S."/>
            <person name="Gehring I."/>
            <person name="Berger A."/>
            <person name="Dooley C.M."/>
            <person name="Ersan-Urun Z."/>
            <person name="Eser C."/>
            <person name="Geiger H."/>
            <person name="Geisler M."/>
            <person name="Karotki L."/>
            <person name="Kirn A."/>
            <person name="Konantz J."/>
            <person name="Konantz M."/>
            <person name="Oberlander M."/>
            <person name="Rudolph-Geiger S."/>
            <person name="Teucke M."/>
            <person name="Lanz C."/>
            <person name="Raddatz G."/>
            <person name="Osoegawa K."/>
            <person name="Zhu B."/>
            <person name="Rapp A."/>
            <person name="Widaa S."/>
            <person name="Langford C."/>
            <person name="Yang F."/>
            <person name="Schuster S.C."/>
            <person name="Carter N.P."/>
            <person name="Harrow J."/>
            <person name="Ning Z."/>
            <person name="Herrero J."/>
            <person name="Searle S.M."/>
            <person name="Enright A."/>
            <person name="Geisler R."/>
            <person name="Plasterk R.H."/>
            <person name="Lee C."/>
            <person name="Westerfield M."/>
            <person name="de Jong P.J."/>
            <person name="Zon L.I."/>
            <person name="Postlethwait J.H."/>
            <person name="Nusslein-Volhard C."/>
            <person name="Hubbard T.J."/>
            <person name="Roest Crollius H."/>
            <person name="Rogers J."/>
            <person name="Stemple D.L."/>
        </authorList>
    </citation>
    <scope>NUCLEOTIDE SEQUENCE [LARGE SCALE GENOMIC DNA]</scope>
    <source>
        <strain>Tuebingen</strain>
    </source>
</reference>
<reference key="2">
    <citation type="submission" date="2007-03" db="EMBL/GenBank/DDBJ databases">
        <authorList>
            <consortium name="NIH - Zebrafish Gene Collection (ZGC) project"/>
        </authorList>
    </citation>
    <scope>NUCLEOTIDE SEQUENCE [LARGE SCALE MRNA]</scope>
</reference>
<reference key="3">
    <citation type="journal article" date="2012" name="Nature">
        <title>Mitochondrial Atpif1 regulates haem synthesis in developing erythroblasts.</title>
        <authorList>
            <person name="Shah D.I."/>
            <person name="Takahashi-Makise N."/>
            <person name="Cooney J.D."/>
            <person name="Li L."/>
            <person name="Schultz I.J."/>
            <person name="Pierce E.L."/>
            <person name="Narla A."/>
            <person name="Seguin A."/>
            <person name="Hattangadi S.M."/>
            <person name="Medlock A.E."/>
            <person name="Langer N.B."/>
            <person name="Dailey T.A."/>
            <person name="Hurst S.N."/>
            <person name="Faccenda D."/>
            <person name="Wiwczar J.M."/>
            <person name="Heggers S.K."/>
            <person name="Vogin G."/>
            <person name="Chen W."/>
            <person name="Chen C."/>
            <person name="Campagna D.R."/>
            <person name="Brugnara C."/>
            <person name="Zhou Y."/>
            <person name="Ebert B.L."/>
            <person name="Danial N.N."/>
            <person name="Fleming M.D."/>
            <person name="Ward D.M."/>
            <person name="Campanella M."/>
            <person name="Dailey H.A."/>
            <person name="Kaplan J."/>
            <person name="Paw B.H."/>
        </authorList>
    </citation>
    <scope>FUNCTION</scope>
    <scope>DISRUPTION PHENOTYPE</scope>
</reference>
<sequence length="105" mass="11944">MARLLLRRGFFSSHIRMSSDQLGELGTGAGKGGGGGGSVRAAGGSFGRREAAEEERYFRQKEREQLAALKNHHEEEIDHHKKEIERLQREIDRHKGKIRKLKHDD</sequence>
<organism>
    <name type="scientific">Danio rerio</name>
    <name type="common">Zebrafish</name>
    <name type="synonym">Brachydanio rerio</name>
    <dbReference type="NCBI Taxonomy" id="7955"/>
    <lineage>
        <taxon>Eukaryota</taxon>
        <taxon>Metazoa</taxon>
        <taxon>Chordata</taxon>
        <taxon>Craniata</taxon>
        <taxon>Vertebrata</taxon>
        <taxon>Euteleostomi</taxon>
        <taxon>Actinopterygii</taxon>
        <taxon>Neopterygii</taxon>
        <taxon>Teleostei</taxon>
        <taxon>Ostariophysi</taxon>
        <taxon>Cypriniformes</taxon>
        <taxon>Danionidae</taxon>
        <taxon>Danioninae</taxon>
        <taxon>Danio</taxon>
    </lineage>
</organism>
<feature type="transit peptide" description="Mitochondrion" evidence="4">
    <location>
        <begin position="1"/>
        <end status="unknown"/>
    </location>
</feature>
<feature type="chain" id="PRO_0000421768" description="ATPase inhibitor A, mitochondrial">
    <location>
        <begin status="unknown"/>
        <end position="105"/>
    </location>
</feature>
<feature type="region of interest" description="Disordered" evidence="5">
    <location>
        <begin position="17"/>
        <end position="52"/>
    </location>
</feature>
<feature type="region of interest" description="N-terminal inhibitory region" evidence="1">
    <location>
        <begin position="22"/>
        <end position="51"/>
    </location>
</feature>
<feature type="region of interest" description="Antiparallel alpha-helical coiled coil region" evidence="1">
    <location>
        <begin position="73"/>
        <end position="105"/>
    </location>
</feature>
<feature type="coiled-coil region" evidence="4">
    <location>
        <begin position="58"/>
        <end position="105"/>
    </location>
</feature>
<feature type="compositionally biased region" description="Gly residues" evidence="5">
    <location>
        <begin position="25"/>
        <end position="38"/>
    </location>
</feature>